<organism>
    <name type="scientific">Rattus norvegicus</name>
    <name type="common">Rat</name>
    <dbReference type="NCBI Taxonomy" id="10116"/>
    <lineage>
        <taxon>Eukaryota</taxon>
        <taxon>Metazoa</taxon>
        <taxon>Chordata</taxon>
        <taxon>Craniata</taxon>
        <taxon>Vertebrata</taxon>
        <taxon>Euteleostomi</taxon>
        <taxon>Mammalia</taxon>
        <taxon>Eutheria</taxon>
        <taxon>Euarchontoglires</taxon>
        <taxon>Glires</taxon>
        <taxon>Rodentia</taxon>
        <taxon>Myomorpha</taxon>
        <taxon>Muroidea</taxon>
        <taxon>Muridae</taxon>
        <taxon>Murinae</taxon>
        <taxon>Rattus</taxon>
    </lineage>
</organism>
<accession>Q5XFW2</accession>
<feature type="transit peptide" description="Mitochondrion" evidence="3">
    <location>
        <begin position="1"/>
        <end status="unknown"/>
    </location>
</feature>
<feature type="chain" id="PRO_0000252092" description="Pseudouridylate synthase TRUB2, mitochondrial">
    <location>
        <begin status="unknown"/>
        <end position="323"/>
    </location>
</feature>
<feature type="region of interest" description="Disordered" evidence="4">
    <location>
        <begin position="302"/>
        <end position="323"/>
    </location>
</feature>
<feature type="active site" description="Nucleophile" evidence="2">
    <location>
        <position position="98"/>
    </location>
</feature>
<evidence type="ECO:0000250" key="1">
    <source>
        <dbReference type="UniProtKB" id="O95900"/>
    </source>
</evidence>
<evidence type="ECO:0000250" key="2">
    <source>
        <dbReference type="UniProtKB" id="Q9Y606"/>
    </source>
</evidence>
<evidence type="ECO:0000255" key="3"/>
<evidence type="ECO:0000256" key="4">
    <source>
        <dbReference type="SAM" id="MobiDB-lite"/>
    </source>
</evidence>
<evidence type="ECO:0000305" key="5"/>
<evidence type="ECO:0000312" key="6">
    <source>
        <dbReference type="RGD" id="1359394"/>
    </source>
</evidence>
<proteinExistence type="evidence at transcript level"/>
<comment type="function">
    <text evidence="1">Minor enzyme contributing to the isomerization of uridine to pseudouridine (pseudouridylation) of specific mitochondrial mRNAs (mt-mRNAs) such as COXI and COXIII mt-mRNAs. As a component of a functional protein-RNA module, consisting of RCC1L, NGRN, RPUSD3, RPUSD4, TRUB2, FASTKD2 and 16S mitochondrial ribosomal RNA (16S mt-rRNA), controls 16S mt-rRNA abundance and is required for intra-mitochondrial translation. Also catalyzes pseudouridylation of some tRNAs, including synthesis of pseudouridine(55) from uracil-55, in the psi GC loop of a subset of tRNAs.</text>
</comment>
<comment type="catalytic activity">
    <reaction evidence="1">
        <text>a uridine in mRNA = a pseudouridine in mRNA</text>
        <dbReference type="Rhea" id="RHEA:56644"/>
        <dbReference type="Rhea" id="RHEA-COMP:14658"/>
        <dbReference type="Rhea" id="RHEA-COMP:14659"/>
        <dbReference type="ChEBI" id="CHEBI:65314"/>
        <dbReference type="ChEBI" id="CHEBI:65315"/>
    </reaction>
</comment>
<comment type="catalytic activity">
    <reaction evidence="1">
        <text>uridine(55) in tRNA = pseudouridine(55) in tRNA</text>
        <dbReference type="Rhea" id="RHEA:42532"/>
        <dbReference type="Rhea" id="RHEA-COMP:10101"/>
        <dbReference type="Rhea" id="RHEA-COMP:10102"/>
        <dbReference type="ChEBI" id="CHEBI:65314"/>
        <dbReference type="ChEBI" id="CHEBI:65315"/>
        <dbReference type="EC" id="5.4.99.25"/>
    </reaction>
    <physiologicalReaction direction="left-to-right" evidence="1">
        <dbReference type="Rhea" id="RHEA:42533"/>
    </physiologicalReaction>
</comment>
<comment type="subunit">
    <text evidence="1">Forms a regulatory protein-RNA complex, consisting of RCC1L, NGRN, RPUSD3, RPUSD4, TRUB2, FASTKD2 and 16S mt-rRNA.</text>
</comment>
<comment type="subcellular location">
    <subcellularLocation>
        <location evidence="1">Mitochondrion matrix</location>
    </subcellularLocation>
    <text evidence="1">Localizes to mitochondrial RNA granules, platforms for post-transcriptional RNA modification and ribosome assembly.</text>
</comment>
<comment type="similarity">
    <text evidence="5">Belongs to the pseudouridine synthase TruB family.</text>
</comment>
<dbReference type="EC" id="5.4.99.-" evidence="1"/>
<dbReference type="EC" id="5.4.99.25" evidence="1"/>
<dbReference type="EMBL" id="BC084712">
    <property type="protein sequence ID" value="AAH84712.1"/>
    <property type="molecule type" value="mRNA"/>
</dbReference>
<dbReference type="RefSeq" id="NP_001014279.1">
    <property type="nucleotide sequence ID" value="NM_001014257.2"/>
</dbReference>
<dbReference type="SMR" id="Q5XFW2"/>
<dbReference type="FunCoup" id="Q5XFW2">
    <property type="interactions" value="1761"/>
</dbReference>
<dbReference type="STRING" id="10116.ENSRNOP00000063203"/>
<dbReference type="PhosphoSitePlus" id="Q5XFW2"/>
<dbReference type="PaxDb" id="10116-ENSRNOP00000063203"/>
<dbReference type="GeneID" id="366012"/>
<dbReference type="KEGG" id="rno:366012"/>
<dbReference type="AGR" id="RGD:1359394"/>
<dbReference type="CTD" id="26995"/>
<dbReference type="RGD" id="1359394">
    <property type="gene designation" value="Trub2"/>
</dbReference>
<dbReference type="VEuPathDB" id="HostDB:ENSRNOG00000043189"/>
<dbReference type="eggNOG" id="KOG2559">
    <property type="taxonomic scope" value="Eukaryota"/>
</dbReference>
<dbReference type="HOGENOM" id="CLU_032087_1_1_1"/>
<dbReference type="InParanoid" id="Q5XFW2"/>
<dbReference type="OrthoDB" id="53236at9989"/>
<dbReference type="PhylomeDB" id="Q5XFW2"/>
<dbReference type="PRO" id="PR:Q5XFW2"/>
<dbReference type="Proteomes" id="UP000002494">
    <property type="component" value="Chromosome 3"/>
</dbReference>
<dbReference type="Bgee" id="ENSRNOG00000043189">
    <property type="expression patterns" value="Expressed in skeletal muscle tissue and 19 other cell types or tissues"/>
</dbReference>
<dbReference type="GO" id="GO:0005759">
    <property type="term" value="C:mitochondrial matrix"/>
    <property type="evidence" value="ECO:0000266"/>
    <property type="project" value="RGD"/>
</dbReference>
<dbReference type="GO" id="GO:0005739">
    <property type="term" value="C:mitochondrion"/>
    <property type="evidence" value="ECO:0000266"/>
    <property type="project" value="RGD"/>
</dbReference>
<dbReference type="GO" id="GO:0035770">
    <property type="term" value="C:ribonucleoprotein granule"/>
    <property type="evidence" value="ECO:0000266"/>
    <property type="project" value="RGD"/>
</dbReference>
<dbReference type="GO" id="GO:0009982">
    <property type="term" value="F:pseudouridine synthase activity"/>
    <property type="evidence" value="ECO:0000250"/>
    <property type="project" value="UniProtKB"/>
</dbReference>
<dbReference type="GO" id="GO:0003723">
    <property type="term" value="F:RNA binding"/>
    <property type="evidence" value="ECO:0007669"/>
    <property type="project" value="InterPro"/>
</dbReference>
<dbReference type="GO" id="GO:0160148">
    <property type="term" value="F:tRNA pseudouridine(55) synthase activity"/>
    <property type="evidence" value="ECO:0007669"/>
    <property type="project" value="RHEA"/>
</dbReference>
<dbReference type="GO" id="GO:0006397">
    <property type="term" value="P:mRNA processing"/>
    <property type="evidence" value="ECO:0007669"/>
    <property type="project" value="UniProtKB-KW"/>
</dbReference>
<dbReference type="GO" id="GO:1990481">
    <property type="term" value="P:mRNA pseudouridine synthesis"/>
    <property type="evidence" value="ECO:0000266"/>
    <property type="project" value="RGD"/>
</dbReference>
<dbReference type="GO" id="GO:0070131">
    <property type="term" value="P:positive regulation of mitochondrial translation"/>
    <property type="evidence" value="ECO:0000250"/>
    <property type="project" value="UniProtKB"/>
</dbReference>
<dbReference type="GO" id="GO:0008033">
    <property type="term" value="P:tRNA processing"/>
    <property type="evidence" value="ECO:0007669"/>
    <property type="project" value="UniProtKB-KW"/>
</dbReference>
<dbReference type="CDD" id="cd02868">
    <property type="entry name" value="PseudoU_synth_hTruB2_like"/>
    <property type="match status" value="1"/>
</dbReference>
<dbReference type="Gene3D" id="3.30.2350.10">
    <property type="entry name" value="Pseudouridine synthase"/>
    <property type="match status" value="1"/>
</dbReference>
<dbReference type="InterPro" id="IPR020103">
    <property type="entry name" value="PsdUridine_synth_cat_dom_sf"/>
</dbReference>
<dbReference type="InterPro" id="IPR002501">
    <property type="entry name" value="PsdUridine_synth_N"/>
</dbReference>
<dbReference type="InterPro" id="IPR039048">
    <property type="entry name" value="Trub2"/>
</dbReference>
<dbReference type="PANTHER" id="PTHR13195">
    <property type="entry name" value="PSEUDOURIDINE SYNTHASE-RELATED"/>
    <property type="match status" value="1"/>
</dbReference>
<dbReference type="PANTHER" id="PTHR13195:SF0">
    <property type="entry name" value="PSEUDOURIDYLATE SYNTHASE TRUB2, MITOCHONDRIAL"/>
    <property type="match status" value="1"/>
</dbReference>
<dbReference type="Pfam" id="PF01509">
    <property type="entry name" value="TruB_N"/>
    <property type="match status" value="1"/>
</dbReference>
<dbReference type="SUPFAM" id="SSF55120">
    <property type="entry name" value="Pseudouridine synthase"/>
    <property type="match status" value="1"/>
</dbReference>
<sequence>MGSSGLARLQGLFAVYKPPGLKWLHVRETVELQLLKGLNAQQPSAPEQHVRFLLGPVEGSEEKKLTLTATSVPSLTTHRLVRGPAFRNLKIGVGHRLDVQASGVLVLAVGHGRSLLTDMYDAHLTKDYTVRGLLGKATDNFCEDGQLIEKTTYDHVTRERLDRILAMIQGSHQKALVMYSNLDLKSQEAYERAVQGVIRPMNKSPMLIAGIRCLHFAPPEFLLEVQCMHETQQQLRRLVHEIGLELKTTAVCMQVRRTRDGFFGLDDALLRTQWDLHSIQDAIQTAAPRVARELRKNLSLMSGHQQQLPSAGQPWASRVQAPL</sequence>
<keyword id="KW-0413">Isomerase</keyword>
<keyword id="KW-0496">Mitochondrion</keyword>
<keyword id="KW-0507">mRNA processing</keyword>
<keyword id="KW-1185">Reference proteome</keyword>
<keyword id="KW-0809">Transit peptide</keyword>
<keyword id="KW-0819">tRNA processing</keyword>
<protein>
    <recommendedName>
        <fullName evidence="5">Pseudouridylate synthase TRUB2, mitochondrial</fullName>
        <ecNumber evidence="1">5.4.99.-</ecNumber>
    </recommendedName>
    <alternativeName>
        <fullName evidence="1">TruB pseudouridine synthase homolog 2</fullName>
    </alternativeName>
    <alternativeName>
        <fullName evidence="5">tRNA pseudouridine 55 synthase TRUB2</fullName>
        <shortName evidence="5">Psi55 synthase TRUB2</shortName>
        <ecNumber evidence="1">5.4.99.25</ecNumber>
    </alternativeName>
</protein>
<name>TRUB2_RAT</name>
<reference key="1">
    <citation type="journal article" date="2004" name="Genome Res.">
        <title>The status, quality, and expansion of the NIH full-length cDNA project: the Mammalian Gene Collection (MGC).</title>
        <authorList>
            <consortium name="The MGC Project Team"/>
        </authorList>
    </citation>
    <scope>NUCLEOTIDE SEQUENCE [LARGE SCALE MRNA]</scope>
    <source>
        <tissue>Ovary</tissue>
    </source>
</reference>
<gene>
    <name evidence="6" type="primary">Trub2</name>
</gene>